<keyword id="KW-0963">Cytoplasm</keyword>
<keyword id="KW-0378">Hydrolase</keyword>
<keyword id="KW-0694">RNA-binding</keyword>
<keyword id="KW-0820">tRNA-binding</keyword>
<organism>
    <name type="scientific">Paraburkholderia phytofirmans (strain DSM 17436 / LMG 22146 / PsJN)</name>
    <name type="common">Burkholderia phytofirmans</name>
    <dbReference type="NCBI Taxonomy" id="398527"/>
    <lineage>
        <taxon>Bacteria</taxon>
        <taxon>Pseudomonadati</taxon>
        <taxon>Pseudomonadota</taxon>
        <taxon>Betaproteobacteria</taxon>
        <taxon>Burkholderiales</taxon>
        <taxon>Burkholderiaceae</taxon>
        <taxon>Paraburkholderia</taxon>
    </lineage>
</organism>
<feature type="chain" id="PRO_1000092921" description="Peptidyl-tRNA hydrolase">
    <location>
        <begin position="1"/>
        <end position="200"/>
    </location>
</feature>
<feature type="active site" description="Proton acceptor" evidence="1">
    <location>
        <position position="20"/>
    </location>
</feature>
<feature type="binding site" evidence="1">
    <location>
        <position position="15"/>
    </location>
    <ligand>
        <name>tRNA</name>
        <dbReference type="ChEBI" id="CHEBI:17843"/>
    </ligand>
</feature>
<feature type="binding site" evidence="1">
    <location>
        <position position="66"/>
    </location>
    <ligand>
        <name>tRNA</name>
        <dbReference type="ChEBI" id="CHEBI:17843"/>
    </ligand>
</feature>
<feature type="binding site" evidence="1">
    <location>
        <position position="68"/>
    </location>
    <ligand>
        <name>tRNA</name>
        <dbReference type="ChEBI" id="CHEBI:17843"/>
    </ligand>
</feature>
<feature type="binding site" evidence="1">
    <location>
        <position position="114"/>
    </location>
    <ligand>
        <name>tRNA</name>
        <dbReference type="ChEBI" id="CHEBI:17843"/>
    </ligand>
</feature>
<feature type="site" description="Discriminates between blocked and unblocked aminoacyl-tRNA" evidence="1">
    <location>
        <position position="10"/>
    </location>
</feature>
<feature type="site" description="Stabilizes the basic form of H active site to accept a proton" evidence="1">
    <location>
        <position position="93"/>
    </location>
</feature>
<accession>B2SXG3</accession>
<reference key="1">
    <citation type="journal article" date="2011" name="J. Bacteriol.">
        <title>Complete genome sequence of the plant growth-promoting endophyte Burkholderia phytofirmans strain PsJN.</title>
        <authorList>
            <person name="Weilharter A."/>
            <person name="Mitter B."/>
            <person name="Shin M.V."/>
            <person name="Chain P.S."/>
            <person name="Nowak J."/>
            <person name="Sessitsch A."/>
        </authorList>
    </citation>
    <scope>NUCLEOTIDE SEQUENCE [LARGE SCALE GENOMIC DNA]</scope>
    <source>
        <strain>DSM 17436 / LMG 22146 / PsJN</strain>
    </source>
</reference>
<dbReference type="EC" id="3.1.1.29" evidence="1"/>
<dbReference type="EMBL" id="CP001052">
    <property type="protein sequence ID" value="ACD15008.1"/>
    <property type="molecule type" value="Genomic_DNA"/>
</dbReference>
<dbReference type="RefSeq" id="WP_012431646.1">
    <property type="nucleotide sequence ID" value="NC_010681.1"/>
</dbReference>
<dbReference type="SMR" id="B2SXG3"/>
<dbReference type="STRING" id="398527.Bphyt_0583"/>
<dbReference type="KEGG" id="bpy:Bphyt_0583"/>
<dbReference type="eggNOG" id="COG0193">
    <property type="taxonomic scope" value="Bacteria"/>
</dbReference>
<dbReference type="HOGENOM" id="CLU_062456_3_1_4"/>
<dbReference type="OrthoDB" id="9800507at2"/>
<dbReference type="Proteomes" id="UP000001739">
    <property type="component" value="Chromosome 1"/>
</dbReference>
<dbReference type="GO" id="GO:0005737">
    <property type="term" value="C:cytoplasm"/>
    <property type="evidence" value="ECO:0007669"/>
    <property type="project" value="UniProtKB-SubCell"/>
</dbReference>
<dbReference type="GO" id="GO:0004045">
    <property type="term" value="F:peptidyl-tRNA hydrolase activity"/>
    <property type="evidence" value="ECO:0007669"/>
    <property type="project" value="UniProtKB-UniRule"/>
</dbReference>
<dbReference type="GO" id="GO:0000049">
    <property type="term" value="F:tRNA binding"/>
    <property type="evidence" value="ECO:0007669"/>
    <property type="project" value="UniProtKB-UniRule"/>
</dbReference>
<dbReference type="GO" id="GO:0006515">
    <property type="term" value="P:protein quality control for misfolded or incompletely synthesized proteins"/>
    <property type="evidence" value="ECO:0007669"/>
    <property type="project" value="UniProtKB-UniRule"/>
</dbReference>
<dbReference type="GO" id="GO:0072344">
    <property type="term" value="P:rescue of stalled ribosome"/>
    <property type="evidence" value="ECO:0007669"/>
    <property type="project" value="UniProtKB-UniRule"/>
</dbReference>
<dbReference type="CDD" id="cd00462">
    <property type="entry name" value="PTH"/>
    <property type="match status" value="1"/>
</dbReference>
<dbReference type="FunFam" id="3.40.50.1470:FF:000001">
    <property type="entry name" value="Peptidyl-tRNA hydrolase"/>
    <property type="match status" value="1"/>
</dbReference>
<dbReference type="Gene3D" id="3.40.50.1470">
    <property type="entry name" value="Peptidyl-tRNA hydrolase"/>
    <property type="match status" value="1"/>
</dbReference>
<dbReference type="HAMAP" id="MF_00083">
    <property type="entry name" value="Pept_tRNA_hydro_bact"/>
    <property type="match status" value="1"/>
</dbReference>
<dbReference type="InterPro" id="IPR001328">
    <property type="entry name" value="Pept_tRNA_hydro"/>
</dbReference>
<dbReference type="InterPro" id="IPR018171">
    <property type="entry name" value="Pept_tRNA_hydro_CS"/>
</dbReference>
<dbReference type="InterPro" id="IPR036416">
    <property type="entry name" value="Pept_tRNA_hydro_sf"/>
</dbReference>
<dbReference type="NCBIfam" id="TIGR00447">
    <property type="entry name" value="pth"/>
    <property type="match status" value="1"/>
</dbReference>
<dbReference type="PANTHER" id="PTHR17224">
    <property type="entry name" value="PEPTIDYL-TRNA HYDROLASE"/>
    <property type="match status" value="1"/>
</dbReference>
<dbReference type="PANTHER" id="PTHR17224:SF1">
    <property type="entry name" value="PEPTIDYL-TRNA HYDROLASE"/>
    <property type="match status" value="1"/>
</dbReference>
<dbReference type="Pfam" id="PF01195">
    <property type="entry name" value="Pept_tRNA_hydro"/>
    <property type="match status" value="1"/>
</dbReference>
<dbReference type="SUPFAM" id="SSF53178">
    <property type="entry name" value="Peptidyl-tRNA hydrolase-like"/>
    <property type="match status" value="1"/>
</dbReference>
<dbReference type="PROSITE" id="PS01195">
    <property type="entry name" value="PEPT_TRNA_HYDROL_1"/>
    <property type="match status" value="1"/>
</dbReference>
<dbReference type="PROSITE" id="PS01196">
    <property type="entry name" value="PEPT_TRNA_HYDROL_2"/>
    <property type="match status" value="1"/>
</dbReference>
<protein>
    <recommendedName>
        <fullName evidence="1">Peptidyl-tRNA hydrolase</fullName>
        <shortName evidence="1">Pth</shortName>
        <ecNumber evidence="1">3.1.1.29</ecNumber>
    </recommendedName>
</protein>
<proteinExistence type="inferred from homology"/>
<name>PTH_PARPJ</name>
<evidence type="ECO:0000255" key="1">
    <source>
        <dbReference type="HAMAP-Rule" id="MF_00083"/>
    </source>
</evidence>
<sequence>MIKLIVGLGNPGAEYTATRHNAGFWLVDQLAREAGTTLRDERRFHGFYAKARLHGEEVHLLEPQTYMNRSGQSVVAVAQFFKILPDEILVAHDELDLPPGSIKLKLGGGSGGHNGLKDITAHLSSQQYWRLRIGIGHPRDLIPESARAGAKPDVANYVLKPPRREEQDVIDASIERGLAVMPQIIKGELERAMMQLHRNP</sequence>
<gene>
    <name evidence="1" type="primary">pth</name>
    <name type="ordered locus">Bphyt_0583</name>
</gene>
<comment type="function">
    <text evidence="1">Hydrolyzes ribosome-free peptidyl-tRNAs (with 1 or more amino acids incorporated), which drop off the ribosome during protein synthesis, or as a result of ribosome stalling.</text>
</comment>
<comment type="function">
    <text evidence="1">Catalyzes the release of premature peptidyl moieties from peptidyl-tRNA molecules trapped in stalled 50S ribosomal subunits, and thus maintains levels of free tRNAs and 50S ribosomes.</text>
</comment>
<comment type="catalytic activity">
    <reaction evidence="1">
        <text>an N-acyl-L-alpha-aminoacyl-tRNA + H2O = an N-acyl-L-amino acid + a tRNA + H(+)</text>
        <dbReference type="Rhea" id="RHEA:54448"/>
        <dbReference type="Rhea" id="RHEA-COMP:10123"/>
        <dbReference type="Rhea" id="RHEA-COMP:13883"/>
        <dbReference type="ChEBI" id="CHEBI:15377"/>
        <dbReference type="ChEBI" id="CHEBI:15378"/>
        <dbReference type="ChEBI" id="CHEBI:59874"/>
        <dbReference type="ChEBI" id="CHEBI:78442"/>
        <dbReference type="ChEBI" id="CHEBI:138191"/>
        <dbReference type="EC" id="3.1.1.29"/>
    </reaction>
</comment>
<comment type="subunit">
    <text evidence="1">Monomer.</text>
</comment>
<comment type="subcellular location">
    <subcellularLocation>
        <location evidence="1">Cytoplasm</location>
    </subcellularLocation>
</comment>
<comment type="similarity">
    <text evidence="1">Belongs to the PTH family.</text>
</comment>